<name>YM49_YEAST</name>
<accession>Q03236</accession>
<accession>D6W011</accession>
<reference key="1">
    <citation type="journal article" date="1997" name="Nature">
        <title>The nucleotide sequence of Saccharomyces cerevisiae chromosome XIII.</title>
        <authorList>
            <person name="Bowman S."/>
            <person name="Churcher C.M."/>
            <person name="Badcock K."/>
            <person name="Brown D."/>
            <person name="Chillingworth T."/>
            <person name="Connor R."/>
            <person name="Dedman K."/>
            <person name="Devlin K."/>
            <person name="Gentles S."/>
            <person name="Hamlin N."/>
            <person name="Hunt S."/>
            <person name="Jagels K."/>
            <person name="Lye G."/>
            <person name="Moule S."/>
            <person name="Odell C."/>
            <person name="Pearson D."/>
            <person name="Rajandream M.A."/>
            <person name="Rice P."/>
            <person name="Skelton J."/>
            <person name="Walsh S.V."/>
            <person name="Whitehead S."/>
            <person name="Barrell B.G."/>
        </authorList>
    </citation>
    <scope>NUCLEOTIDE SEQUENCE [LARGE SCALE GENOMIC DNA]</scope>
    <source>
        <strain>ATCC 204508 / S288c</strain>
    </source>
</reference>
<reference key="2">
    <citation type="journal article" date="2014" name="G3 (Bethesda)">
        <title>The reference genome sequence of Saccharomyces cerevisiae: Then and now.</title>
        <authorList>
            <person name="Engel S.R."/>
            <person name="Dietrich F.S."/>
            <person name="Fisk D.G."/>
            <person name="Binkley G."/>
            <person name="Balakrishnan R."/>
            <person name="Costanzo M.C."/>
            <person name="Dwight S.S."/>
            <person name="Hitz B.C."/>
            <person name="Karra K."/>
            <person name="Nash R.S."/>
            <person name="Weng S."/>
            <person name="Wong E.D."/>
            <person name="Lloyd P."/>
            <person name="Skrzypek M.S."/>
            <person name="Miyasato S.R."/>
            <person name="Simison M."/>
            <person name="Cherry J.M."/>
        </authorList>
    </citation>
    <scope>GENOME REANNOTATION</scope>
    <source>
        <strain>ATCC 204508 / S288c</strain>
    </source>
</reference>
<evidence type="ECO:0000255" key="1"/>
<evidence type="ECO:0000305" key="2"/>
<comment type="subcellular location">
    <subcellularLocation>
        <location evidence="2">Membrane</location>
        <topology evidence="2">Multi-pass membrane protein</topology>
    </subcellularLocation>
</comment>
<proteinExistence type="predicted"/>
<dbReference type="EMBL" id="Z49808">
    <property type="protein sequence ID" value="CAA89920.1"/>
    <property type="molecule type" value="Genomic_DNA"/>
</dbReference>
<dbReference type="EMBL" id="BK006946">
    <property type="protein sequence ID" value="DAA10085.1"/>
    <property type="molecule type" value="Genomic_DNA"/>
</dbReference>
<dbReference type="PIR" id="S55134">
    <property type="entry name" value="S55134"/>
</dbReference>
<dbReference type="RefSeq" id="NP_013912.1">
    <property type="nucleotide sequence ID" value="NM_001182693.1"/>
</dbReference>
<dbReference type="BioGRID" id="35365">
    <property type="interactions" value="39"/>
</dbReference>
<dbReference type="DIP" id="DIP-4420N"/>
<dbReference type="FunCoup" id="Q03236">
    <property type="interactions" value="40"/>
</dbReference>
<dbReference type="IntAct" id="Q03236">
    <property type="interactions" value="2"/>
</dbReference>
<dbReference type="MINT" id="Q03236"/>
<dbReference type="STRING" id="4932.YMR187C"/>
<dbReference type="PaxDb" id="4932-YMR187C"/>
<dbReference type="PeptideAtlas" id="Q03236"/>
<dbReference type="EnsemblFungi" id="YMR187C_mRNA">
    <property type="protein sequence ID" value="YMR187C"/>
    <property type="gene ID" value="YMR187C"/>
</dbReference>
<dbReference type="GeneID" id="855225"/>
<dbReference type="KEGG" id="sce:YMR187C"/>
<dbReference type="AGR" id="SGD:S000004799"/>
<dbReference type="SGD" id="S000004799">
    <property type="gene designation" value="YMR187C"/>
</dbReference>
<dbReference type="VEuPathDB" id="FungiDB:YMR187C"/>
<dbReference type="eggNOG" id="ENOG502RQF8">
    <property type="taxonomic scope" value="Eukaryota"/>
</dbReference>
<dbReference type="HOGENOM" id="CLU_636401_0_0_1"/>
<dbReference type="InParanoid" id="Q03236"/>
<dbReference type="OMA" id="WICLEES"/>
<dbReference type="OrthoDB" id="4070369at2759"/>
<dbReference type="BioCyc" id="YEAST:G3O-32875-MONOMER"/>
<dbReference type="BioGRID-ORCS" id="855225">
    <property type="hits" value="1 hit in 10 CRISPR screens"/>
</dbReference>
<dbReference type="PRO" id="PR:Q03236"/>
<dbReference type="Proteomes" id="UP000002311">
    <property type="component" value="Chromosome XIII"/>
</dbReference>
<dbReference type="RNAct" id="Q03236">
    <property type="molecule type" value="protein"/>
</dbReference>
<dbReference type="GO" id="GO:0016020">
    <property type="term" value="C:membrane"/>
    <property type="evidence" value="ECO:0007669"/>
    <property type="project" value="UniProtKB-SubCell"/>
</dbReference>
<organism>
    <name type="scientific">Saccharomyces cerevisiae (strain ATCC 204508 / S288c)</name>
    <name type="common">Baker's yeast</name>
    <dbReference type="NCBI Taxonomy" id="559292"/>
    <lineage>
        <taxon>Eukaryota</taxon>
        <taxon>Fungi</taxon>
        <taxon>Dikarya</taxon>
        <taxon>Ascomycota</taxon>
        <taxon>Saccharomycotina</taxon>
        <taxon>Saccharomycetes</taxon>
        <taxon>Saccharomycetales</taxon>
        <taxon>Saccharomycetaceae</taxon>
        <taxon>Saccharomyces</taxon>
    </lineage>
</organism>
<gene>
    <name type="ordered locus">YMR187C</name>
    <name type="ORF">YM8010.17C</name>
</gene>
<keyword id="KW-0472">Membrane</keyword>
<keyword id="KW-1185">Reference proteome</keyword>
<keyword id="KW-0812">Transmembrane</keyword>
<keyword id="KW-1133">Transmembrane helix</keyword>
<feature type="chain" id="PRO_0000203323" description="Uncharacterized protein YMR187C">
    <location>
        <begin position="1"/>
        <end position="431"/>
    </location>
</feature>
<feature type="transmembrane region" description="Helical" evidence="1">
    <location>
        <begin position="228"/>
        <end position="248"/>
    </location>
</feature>
<feature type="transmembrane region" description="Helical" evidence="1">
    <location>
        <begin position="279"/>
        <end position="299"/>
    </location>
</feature>
<feature type="transmembrane region" description="Helical" evidence="1">
    <location>
        <begin position="349"/>
        <end position="369"/>
    </location>
</feature>
<feature type="transmembrane region" description="Helical" evidence="1">
    <location>
        <begin position="388"/>
        <end position="408"/>
    </location>
</feature>
<protein>
    <recommendedName>
        <fullName>Uncharacterized protein YMR187C</fullName>
    </recommendedName>
</protein>
<sequence>MTPPHFFLSLIKKRCICWICLEESTYDSTWLQHTCGCNLQIHKRCYIRWLYQMHVELFLPNTVDLPKDADLPIITCLKCLVDGHHDFMTTFSLTEIWETRPIWGQKSVPFQNDYVFNLMSLYTKRDNHPPYVLVKFGECPQCKKTNFIKRPTVTIQSSVLSLFYQWQKITRYVIPLGITSLFLLNPEKTSFDIGLWQLRCLFPENVLRNMLNISTTKALDVYAQTERGLLSIPLTSSIIIYGFIHYLSNISNVSANAILFKWVYLSIVKTAGNKYYKGIGLPKIILYSNLATFCYNFTFKRLVDLIYRRLINKGGKYLYHGNFENSSNSVPAEEFFIRRNWYAILAEKILWPFVGKCTGGLLLNAFLWIQRKFKIEWTPNCSPSEFRMIFNIIGCGTAAIGWSSLKLYASYKRCQELEKINEFIEQSCKGE</sequence>